<gene>
    <name type="primary">CHLI</name>
</gene>
<comment type="function">
    <text evidence="1">Involved in chlorophyll biosynthesis. Catalyzes the insertion of magnesium ion into protoporphyrin IX to yield Mg-protoporphyrin IX. The magnesium-chelatase is a complex of three subunits, CHLI, CHLD and CHLH. The reaction takes place in two steps, with an ATP-dependent activation followed by an ATP-dependent chelation step (By similarity).</text>
</comment>
<comment type="catalytic activity">
    <reaction>
        <text>protoporphyrin IX + Mg(2+) + ATP + H2O = Mg-protoporphyrin IX + ADP + phosphate + 3 H(+)</text>
        <dbReference type="Rhea" id="RHEA:13961"/>
        <dbReference type="ChEBI" id="CHEBI:15377"/>
        <dbReference type="ChEBI" id="CHEBI:15378"/>
        <dbReference type="ChEBI" id="CHEBI:18420"/>
        <dbReference type="ChEBI" id="CHEBI:30616"/>
        <dbReference type="ChEBI" id="CHEBI:43474"/>
        <dbReference type="ChEBI" id="CHEBI:57306"/>
        <dbReference type="ChEBI" id="CHEBI:60492"/>
        <dbReference type="ChEBI" id="CHEBI:456216"/>
        <dbReference type="EC" id="6.6.1.1"/>
    </reaction>
</comment>
<comment type="activity regulation">
    <text evidence="1">Redox regulation; active in reducing conditions, inactive in oxidizing conditions. Thioredoxins f and m mediate the reversible reductive activation of oxidized CHLI (By similarity).</text>
</comment>
<comment type="pathway">
    <text>Porphyrin-containing compound metabolism; chlorophyll biosynthesis.</text>
</comment>
<comment type="subunit">
    <text>The magnesium chelatase complex is a heterotrimer consisting of subunits CHLI, CHLD and CHLH.</text>
</comment>
<comment type="subcellular location">
    <subcellularLocation>
        <location evidence="3">Plastid</location>
        <location evidence="3">Chloroplast</location>
    </subcellularLocation>
</comment>
<comment type="similarity">
    <text evidence="3">Belongs to the Mg-chelatase subunits D/I family.</text>
</comment>
<dbReference type="EC" id="6.6.1.1"/>
<dbReference type="EMBL" id="D45857">
    <property type="protein sequence ID" value="BAA08291.1"/>
    <property type="molecule type" value="mRNA"/>
</dbReference>
<dbReference type="PIR" id="JC4312">
    <property type="entry name" value="JC4312"/>
</dbReference>
<dbReference type="RefSeq" id="NP_001347251.1">
    <property type="nucleotide sequence ID" value="NM_001360322.1"/>
</dbReference>
<dbReference type="RefSeq" id="XP_003543008.1">
    <property type="nucleotide sequence ID" value="XM_003542960.3"/>
</dbReference>
<dbReference type="SMR" id="P93162"/>
<dbReference type="FunCoup" id="P93162">
    <property type="interactions" value="1763"/>
</dbReference>
<dbReference type="STRING" id="3847.P93162"/>
<dbReference type="PaxDb" id="3847-GLYMA13G30560.1"/>
<dbReference type="ProMEX" id="P93162"/>
<dbReference type="EnsemblPlants" id="KRH21317">
    <property type="protein sequence ID" value="KRH21317"/>
    <property type="gene ID" value="GLYMA_13G232500"/>
</dbReference>
<dbReference type="GeneID" id="100784256"/>
<dbReference type="Gramene" id="KRH21317">
    <property type="protein sequence ID" value="KRH21317"/>
    <property type="gene ID" value="GLYMA_13G232500"/>
</dbReference>
<dbReference type="eggNOG" id="ENOG502QRUY">
    <property type="taxonomic scope" value="Eukaryota"/>
</dbReference>
<dbReference type="HOGENOM" id="CLU_016684_0_0_1"/>
<dbReference type="InParanoid" id="P93162"/>
<dbReference type="OMA" id="VCFRPGN"/>
<dbReference type="OrthoDB" id="34999at2759"/>
<dbReference type="UniPathway" id="UPA00668"/>
<dbReference type="Proteomes" id="UP000008827">
    <property type="component" value="Chromosome 13"/>
</dbReference>
<dbReference type="GO" id="GO:0009570">
    <property type="term" value="C:chloroplast stroma"/>
    <property type="evidence" value="ECO:0000318"/>
    <property type="project" value="GO_Central"/>
</dbReference>
<dbReference type="GO" id="GO:0005524">
    <property type="term" value="F:ATP binding"/>
    <property type="evidence" value="ECO:0007669"/>
    <property type="project" value="UniProtKB-KW"/>
</dbReference>
<dbReference type="GO" id="GO:0016887">
    <property type="term" value="F:ATP hydrolysis activity"/>
    <property type="evidence" value="ECO:0007669"/>
    <property type="project" value="InterPro"/>
</dbReference>
<dbReference type="GO" id="GO:0016851">
    <property type="term" value="F:magnesium chelatase activity"/>
    <property type="evidence" value="ECO:0007669"/>
    <property type="project" value="UniProtKB-EC"/>
</dbReference>
<dbReference type="GO" id="GO:0015995">
    <property type="term" value="P:chlorophyll biosynthetic process"/>
    <property type="evidence" value="ECO:0000318"/>
    <property type="project" value="GO_Central"/>
</dbReference>
<dbReference type="GO" id="GO:0015979">
    <property type="term" value="P:photosynthesis"/>
    <property type="evidence" value="ECO:0007669"/>
    <property type="project" value="UniProtKB-KW"/>
</dbReference>
<dbReference type="CDD" id="cd00009">
    <property type="entry name" value="AAA"/>
    <property type="match status" value="1"/>
</dbReference>
<dbReference type="FunFam" id="1.10.8.80:FF:000001">
    <property type="entry name" value="Mg-protoporphyrin IX chelatase"/>
    <property type="match status" value="1"/>
</dbReference>
<dbReference type="FunFam" id="3.40.50.300:FF:000601">
    <property type="entry name" value="Mg-protoporphyrin IX chelatase"/>
    <property type="match status" value="1"/>
</dbReference>
<dbReference type="Gene3D" id="1.10.8.80">
    <property type="entry name" value="Magnesium chelatase subunit I, C-Terminal domain"/>
    <property type="match status" value="1"/>
</dbReference>
<dbReference type="Gene3D" id="3.40.50.300">
    <property type="entry name" value="P-loop containing nucleotide triphosphate hydrolases"/>
    <property type="match status" value="1"/>
</dbReference>
<dbReference type="InterPro" id="IPR003593">
    <property type="entry name" value="AAA+_ATPase"/>
</dbReference>
<dbReference type="InterPro" id="IPR045006">
    <property type="entry name" value="CHLI-like"/>
</dbReference>
<dbReference type="InterPro" id="IPR041628">
    <property type="entry name" value="ChlI/MoxR_AAA_lid"/>
</dbReference>
<dbReference type="InterPro" id="IPR011775">
    <property type="entry name" value="Mg_chelatase_ATPase-isu"/>
</dbReference>
<dbReference type="InterPro" id="IPR000523">
    <property type="entry name" value="Mg_chelatse_chII-like_cat_dom"/>
</dbReference>
<dbReference type="InterPro" id="IPR027417">
    <property type="entry name" value="P-loop_NTPase"/>
</dbReference>
<dbReference type="NCBIfam" id="TIGR02030">
    <property type="entry name" value="BchI-ChlI"/>
    <property type="match status" value="1"/>
</dbReference>
<dbReference type="PANTHER" id="PTHR32039">
    <property type="entry name" value="MAGNESIUM-CHELATASE SUBUNIT CHLI"/>
    <property type="match status" value="1"/>
</dbReference>
<dbReference type="PANTHER" id="PTHR32039:SF9">
    <property type="entry name" value="MAGNESIUM-CHELATASE SUBUNIT CHLI-2, CHLOROPLASTIC"/>
    <property type="match status" value="1"/>
</dbReference>
<dbReference type="Pfam" id="PF17863">
    <property type="entry name" value="AAA_lid_2"/>
    <property type="match status" value="1"/>
</dbReference>
<dbReference type="Pfam" id="PF01078">
    <property type="entry name" value="Mg_chelatase"/>
    <property type="match status" value="1"/>
</dbReference>
<dbReference type="SMART" id="SM00382">
    <property type="entry name" value="AAA"/>
    <property type="match status" value="1"/>
</dbReference>
<dbReference type="SUPFAM" id="SSF52540">
    <property type="entry name" value="P-loop containing nucleoside triphosphate hydrolases"/>
    <property type="match status" value="1"/>
</dbReference>
<name>CHLI_SOYBN</name>
<accession>P93162</accession>
<protein>
    <recommendedName>
        <fullName>Magnesium-chelatase subunit ChlI, chloroplastic</fullName>
        <shortName>Mg-chelatase subunit I-1</shortName>
        <ecNumber>6.6.1.1</ecNumber>
    </recommendedName>
    <alternativeName>
        <fullName>Mg-protoporphyrin IX chelatase subunit ChlI</fullName>
    </alternativeName>
</protein>
<organism>
    <name type="scientific">Glycine max</name>
    <name type="common">Soybean</name>
    <name type="synonym">Glycine hispida</name>
    <dbReference type="NCBI Taxonomy" id="3847"/>
    <lineage>
        <taxon>Eukaryota</taxon>
        <taxon>Viridiplantae</taxon>
        <taxon>Streptophyta</taxon>
        <taxon>Embryophyta</taxon>
        <taxon>Tracheophyta</taxon>
        <taxon>Spermatophyta</taxon>
        <taxon>Magnoliopsida</taxon>
        <taxon>eudicotyledons</taxon>
        <taxon>Gunneridae</taxon>
        <taxon>Pentapetalae</taxon>
        <taxon>rosids</taxon>
        <taxon>fabids</taxon>
        <taxon>Fabales</taxon>
        <taxon>Fabaceae</taxon>
        <taxon>Papilionoideae</taxon>
        <taxon>50 kb inversion clade</taxon>
        <taxon>NPAAA clade</taxon>
        <taxon>indigoferoid/millettioid clade</taxon>
        <taxon>Phaseoleae</taxon>
        <taxon>Glycine</taxon>
        <taxon>Glycine subgen. Soja</taxon>
    </lineage>
</organism>
<keyword id="KW-0067">ATP-binding</keyword>
<keyword id="KW-0149">Chlorophyll biosynthesis</keyword>
<keyword id="KW-0150">Chloroplast</keyword>
<keyword id="KW-1015">Disulfide bond</keyword>
<keyword id="KW-0436">Ligase</keyword>
<keyword id="KW-0547">Nucleotide-binding</keyword>
<keyword id="KW-0602">Photosynthesis</keyword>
<keyword id="KW-0934">Plastid</keyword>
<keyword id="KW-1185">Reference proteome</keyword>
<keyword id="KW-0809">Transit peptide</keyword>
<sequence length="421" mass="45871">MASALGTSSIAVLPSRYFSSSSSKPSIHTLSLTSGQNYGRKFYGGIGIHGIKGRAQLSVTNVATEVNSVEQAQSIASKESQRPVYPFSAIVGQDEMKLCLLLNVIDPKIGGVMIMGDRGTGKSTTVRSLVDLLPEIKVVAGDPYNSDPQDPEFMGVEVRERVLQGEELSVVLTKINMVDLPLGATEDRVCGTIDIEKALTEGVKAFEPGLLAKANRGILYVDEVNLLDDHLVDVLLDSAASGWNTVEREGISISHPARFILIGSGNPEEGELRPQLLDRFGMHAQVGTVRDAELRVKIVEERGRFDKNPKEFRDSYKAEQEKLQQQITSARSVLSSVQIDQDLKVKISKVCAELNVDGLRGDIVTNRAAKALAALKGRDNVSAEDIATVIPNCLRHRLRKDPLESIDSGLLVTEKFYEVFS</sequence>
<proteinExistence type="evidence at transcript level"/>
<evidence type="ECO:0000250" key="1"/>
<evidence type="ECO:0000255" key="2"/>
<evidence type="ECO:0000305" key="3"/>
<reference key="1">
    <citation type="journal article" date="1995" name="Biochem. Biophys. Res. Commun.">
        <title>Cloning, subcellular localization and expression of CHL1, a subunit of magnesium-chelatase in soybean.</title>
        <authorList>
            <person name="Nakayama M."/>
            <person name="Masuda T."/>
            <person name="Sato N."/>
            <person name="Yamagata H."/>
            <person name="Bowler C."/>
            <person name="Ohta H."/>
            <person name="Shioi Y."/>
            <person name="Takamiya K."/>
        </authorList>
    </citation>
    <scope>NUCLEOTIDE SEQUENCE [MRNA]</scope>
    <source>
        <strain>cv. Resnik</strain>
    </source>
</reference>
<feature type="transit peptide" description="Chloroplast" evidence="2">
    <location>
        <begin position="1"/>
        <end position="61"/>
    </location>
</feature>
<feature type="chain" id="PRO_0000002803" description="Magnesium-chelatase subunit ChlI, chloroplastic">
    <location>
        <begin position="62"/>
        <end position="421"/>
    </location>
</feature>
<feature type="binding site" evidence="2">
    <location>
        <begin position="116"/>
        <end position="123"/>
    </location>
    <ligand>
        <name>ATP</name>
        <dbReference type="ChEBI" id="CHEBI:30616"/>
    </ligand>
</feature>
<feature type="disulfide bond" evidence="1">
    <location>
        <begin position="99"/>
        <end position="190"/>
    </location>
</feature>
<feature type="disulfide bond" description="Inhibitory under oxidizing conditions" evidence="1">
    <location>
        <begin position="351"/>
        <end position="393"/>
    </location>
</feature>